<comment type="function">
    <text evidence="1">One of the primary rRNA binding proteins. Required for association of the 30S and 50S subunits to form the 70S ribosome, for tRNA binding and peptide bond formation. It has been suggested to have peptidyltransferase activity; this is somewhat controversial. Makes several contacts with the 16S rRNA in the 70S ribosome.</text>
</comment>
<comment type="subunit">
    <text evidence="1">Part of the 50S ribosomal subunit. Forms a bridge to the 30S subunit in the 70S ribosome.</text>
</comment>
<comment type="similarity">
    <text evidence="1">Belongs to the universal ribosomal protein uL2 family.</text>
</comment>
<name>RL2_ECO24</name>
<evidence type="ECO:0000255" key="1">
    <source>
        <dbReference type="HAMAP-Rule" id="MF_01320"/>
    </source>
</evidence>
<evidence type="ECO:0000256" key="2">
    <source>
        <dbReference type="SAM" id="MobiDB-lite"/>
    </source>
</evidence>
<evidence type="ECO:0000305" key="3"/>
<dbReference type="EMBL" id="CP000800">
    <property type="protein sequence ID" value="ABV19226.1"/>
    <property type="molecule type" value="Genomic_DNA"/>
</dbReference>
<dbReference type="RefSeq" id="WP_000301864.1">
    <property type="nucleotide sequence ID" value="NC_009801.1"/>
</dbReference>
<dbReference type="SMR" id="A7ZSK6"/>
<dbReference type="GeneID" id="93778670"/>
<dbReference type="KEGG" id="ecw:EcE24377A_3800"/>
<dbReference type="HOGENOM" id="CLU_036235_2_1_6"/>
<dbReference type="Proteomes" id="UP000001122">
    <property type="component" value="Chromosome"/>
</dbReference>
<dbReference type="GO" id="GO:0005829">
    <property type="term" value="C:cytosol"/>
    <property type="evidence" value="ECO:0007669"/>
    <property type="project" value="UniProtKB-ARBA"/>
</dbReference>
<dbReference type="GO" id="GO:0015934">
    <property type="term" value="C:large ribosomal subunit"/>
    <property type="evidence" value="ECO:0007669"/>
    <property type="project" value="InterPro"/>
</dbReference>
<dbReference type="GO" id="GO:0019843">
    <property type="term" value="F:rRNA binding"/>
    <property type="evidence" value="ECO:0007669"/>
    <property type="project" value="UniProtKB-UniRule"/>
</dbReference>
<dbReference type="GO" id="GO:0003735">
    <property type="term" value="F:structural constituent of ribosome"/>
    <property type="evidence" value="ECO:0007669"/>
    <property type="project" value="InterPro"/>
</dbReference>
<dbReference type="GO" id="GO:0016740">
    <property type="term" value="F:transferase activity"/>
    <property type="evidence" value="ECO:0007669"/>
    <property type="project" value="InterPro"/>
</dbReference>
<dbReference type="GO" id="GO:0002181">
    <property type="term" value="P:cytoplasmic translation"/>
    <property type="evidence" value="ECO:0007669"/>
    <property type="project" value="TreeGrafter"/>
</dbReference>
<dbReference type="FunFam" id="2.30.30.30:FF:000001">
    <property type="entry name" value="50S ribosomal protein L2"/>
    <property type="match status" value="1"/>
</dbReference>
<dbReference type="FunFam" id="2.40.50.140:FF:000003">
    <property type="entry name" value="50S ribosomal protein L2"/>
    <property type="match status" value="1"/>
</dbReference>
<dbReference type="FunFam" id="4.10.950.10:FF:000001">
    <property type="entry name" value="50S ribosomal protein L2"/>
    <property type="match status" value="1"/>
</dbReference>
<dbReference type="Gene3D" id="2.30.30.30">
    <property type="match status" value="1"/>
</dbReference>
<dbReference type="Gene3D" id="2.40.50.140">
    <property type="entry name" value="Nucleic acid-binding proteins"/>
    <property type="match status" value="1"/>
</dbReference>
<dbReference type="Gene3D" id="4.10.950.10">
    <property type="entry name" value="Ribosomal protein L2, domain 3"/>
    <property type="match status" value="1"/>
</dbReference>
<dbReference type="HAMAP" id="MF_01320_B">
    <property type="entry name" value="Ribosomal_uL2_B"/>
    <property type="match status" value="1"/>
</dbReference>
<dbReference type="InterPro" id="IPR012340">
    <property type="entry name" value="NA-bd_OB-fold"/>
</dbReference>
<dbReference type="InterPro" id="IPR014722">
    <property type="entry name" value="Rib_uL2_dom2"/>
</dbReference>
<dbReference type="InterPro" id="IPR002171">
    <property type="entry name" value="Ribosomal_uL2"/>
</dbReference>
<dbReference type="InterPro" id="IPR005880">
    <property type="entry name" value="Ribosomal_uL2_bac/org-type"/>
</dbReference>
<dbReference type="InterPro" id="IPR022669">
    <property type="entry name" value="Ribosomal_uL2_C"/>
</dbReference>
<dbReference type="InterPro" id="IPR022671">
    <property type="entry name" value="Ribosomal_uL2_CS"/>
</dbReference>
<dbReference type="InterPro" id="IPR014726">
    <property type="entry name" value="Ribosomal_uL2_dom3"/>
</dbReference>
<dbReference type="InterPro" id="IPR022666">
    <property type="entry name" value="Ribosomal_uL2_RNA-bd_dom"/>
</dbReference>
<dbReference type="InterPro" id="IPR008991">
    <property type="entry name" value="Translation_prot_SH3-like_sf"/>
</dbReference>
<dbReference type="NCBIfam" id="TIGR01171">
    <property type="entry name" value="rplB_bact"/>
    <property type="match status" value="1"/>
</dbReference>
<dbReference type="PANTHER" id="PTHR13691:SF5">
    <property type="entry name" value="LARGE RIBOSOMAL SUBUNIT PROTEIN UL2M"/>
    <property type="match status" value="1"/>
</dbReference>
<dbReference type="PANTHER" id="PTHR13691">
    <property type="entry name" value="RIBOSOMAL PROTEIN L2"/>
    <property type="match status" value="1"/>
</dbReference>
<dbReference type="Pfam" id="PF00181">
    <property type="entry name" value="Ribosomal_L2"/>
    <property type="match status" value="1"/>
</dbReference>
<dbReference type="Pfam" id="PF03947">
    <property type="entry name" value="Ribosomal_L2_C"/>
    <property type="match status" value="1"/>
</dbReference>
<dbReference type="PIRSF" id="PIRSF002158">
    <property type="entry name" value="Ribosomal_L2"/>
    <property type="match status" value="1"/>
</dbReference>
<dbReference type="SMART" id="SM01383">
    <property type="entry name" value="Ribosomal_L2"/>
    <property type="match status" value="1"/>
</dbReference>
<dbReference type="SMART" id="SM01382">
    <property type="entry name" value="Ribosomal_L2_C"/>
    <property type="match status" value="1"/>
</dbReference>
<dbReference type="SUPFAM" id="SSF50249">
    <property type="entry name" value="Nucleic acid-binding proteins"/>
    <property type="match status" value="1"/>
</dbReference>
<dbReference type="SUPFAM" id="SSF50104">
    <property type="entry name" value="Translation proteins SH3-like domain"/>
    <property type="match status" value="1"/>
</dbReference>
<dbReference type="PROSITE" id="PS00467">
    <property type="entry name" value="RIBOSOMAL_L2"/>
    <property type="match status" value="1"/>
</dbReference>
<gene>
    <name evidence="1" type="primary">rplB</name>
    <name type="ordered locus">EcE24377A_3800</name>
</gene>
<feature type="chain" id="PRO_1000067539" description="Large ribosomal subunit protein uL2">
    <location>
        <begin position="1"/>
        <end position="273"/>
    </location>
</feature>
<feature type="region of interest" description="Disordered" evidence="2">
    <location>
        <begin position="28"/>
        <end position="53"/>
    </location>
</feature>
<feature type="region of interest" description="Disordered" evidence="2">
    <location>
        <begin position="221"/>
        <end position="273"/>
    </location>
</feature>
<feature type="compositionally biased region" description="Low complexity" evidence="2">
    <location>
        <begin position="39"/>
        <end position="48"/>
    </location>
</feature>
<feature type="modified residue" description="N6-acetyllysine" evidence="1">
    <location>
        <position position="242"/>
    </location>
</feature>
<accession>A7ZSK6</accession>
<reference key="1">
    <citation type="journal article" date="2008" name="J. Bacteriol.">
        <title>The pangenome structure of Escherichia coli: comparative genomic analysis of E. coli commensal and pathogenic isolates.</title>
        <authorList>
            <person name="Rasko D.A."/>
            <person name="Rosovitz M.J."/>
            <person name="Myers G.S.A."/>
            <person name="Mongodin E.F."/>
            <person name="Fricke W.F."/>
            <person name="Gajer P."/>
            <person name="Crabtree J."/>
            <person name="Sebaihia M."/>
            <person name="Thomson N.R."/>
            <person name="Chaudhuri R."/>
            <person name="Henderson I.R."/>
            <person name="Sperandio V."/>
            <person name="Ravel J."/>
        </authorList>
    </citation>
    <scope>NUCLEOTIDE SEQUENCE [LARGE SCALE GENOMIC DNA]</scope>
    <source>
        <strain>E24377A / ETEC</strain>
    </source>
</reference>
<protein>
    <recommendedName>
        <fullName evidence="1">Large ribosomal subunit protein uL2</fullName>
    </recommendedName>
    <alternativeName>
        <fullName evidence="3">50S ribosomal protein L2</fullName>
    </alternativeName>
</protein>
<proteinExistence type="inferred from homology"/>
<organism>
    <name type="scientific">Escherichia coli O139:H28 (strain E24377A / ETEC)</name>
    <dbReference type="NCBI Taxonomy" id="331111"/>
    <lineage>
        <taxon>Bacteria</taxon>
        <taxon>Pseudomonadati</taxon>
        <taxon>Pseudomonadota</taxon>
        <taxon>Gammaproteobacteria</taxon>
        <taxon>Enterobacterales</taxon>
        <taxon>Enterobacteriaceae</taxon>
        <taxon>Escherichia</taxon>
    </lineage>
</organism>
<sequence length="273" mass="29860">MAVVKCKPTSPGRRHVVKVVNPELHKGKPFAPLLEKNSKSGGRNNNGRITTRHIGGGHKQAYRIVDFKRNKDGIPAVVERLEYDPNRSANIALVLYKDGERRYILAPKGLKAGDQIQSGVDAAIKPGNTLPMRNIPVGSTVHNVEMKPGKGGQLARSAGTYVQIVARDGAYVTLRLRSGEMRKVEADCRATLGEVGNAEHMLRVLGKAGAARWRGVRPTVRGTAMNPVDHPHGGGEGRNFGKHPVTPWGVQTKGKKTRSNKRTDKFIVRRRSK</sequence>
<keyword id="KW-0007">Acetylation</keyword>
<keyword id="KW-1185">Reference proteome</keyword>
<keyword id="KW-0687">Ribonucleoprotein</keyword>
<keyword id="KW-0689">Ribosomal protein</keyword>
<keyword id="KW-0694">RNA-binding</keyword>
<keyword id="KW-0699">rRNA-binding</keyword>